<sequence>AGVDPAIPAYVKTNG</sequence>
<name>CWP17_PHAVU</name>
<proteinExistence type="evidence at protein level"/>
<reference evidence="3" key="1">
    <citation type="journal article" date="1997" name="J. Biol. Chem.">
        <title>Differential extraction and protein sequencing reveals major differences in patterns of primary cell wall proteins from plants.</title>
        <authorList>
            <person name="Robertson D."/>
            <person name="Mitchell G.P."/>
            <person name="Gilroy J.S."/>
            <person name="Gerrish C."/>
            <person name="Bolwell G.P."/>
            <person name="Slabas A.R."/>
        </authorList>
    </citation>
    <scope>PROTEIN SEQUENCE</scope>
    <scope>SUBCELLULAR LOCATION</scope>
</reference>
<organism>
    <name type="scientific">Phaseolus vulgaris</name>
    <name type="common">Kidney bean</name>
    <name type="synonym">French bean</name>
    <dbReference type="NCBI Taxonomy" id="3885"/>
    <lineage>
        <taxon>Eukaryota</taxon>
        <taxon>Viridiplantae</taxon>
        <taxon>Streptophyta</taxon>
        <taxon>Embryophyta</taxon>
        <taxon>Tracheophyta</taxon>
        <taxon>Spermatophyta</taxon>
        <taxon>Magnoliopsida</taxon>
        <taxon>eudicotyledons</taxon>
        <taxon>Gunneridae</taxon>
        <taxon>Pentapetalae</taxon>
        <taxon>rosids</taxon>
        <taxon>fabids</taxon>
        <taxon>Fabales</taxon>
        <taxon>Fabaceae</taxon>
        <taxon>Papilionoideae</taxon>
        <taxon>50 kb inversion clade</taxon>
        <taxon>NPAAA clade</taxon>
        <taxon>indigoferoid/millettioid clade</taxon>
        <taxon>Phaseoleae</taxon>
        <taxon>Phaseolus</taxon>
    </lineage>
</organism>
<evidence type="ECO:0000269" key="1">
    <source>
    </source>
</evidence>
<evidence type="ECO:0000303" key="2">
    <source>
    </source>
</evidence>
<evidence type="ECO:0000305" key="3"/>
<keyword id="KW-0134">Cell wall</keyword>
<keyword id="KW-0903">Direct protein sequencing</keyword>
<keyword id="KW-0964">Secreted</keyword>
<comment type="subcellular location">
    <subcellularLocation>
        <location evidence="1">Secreted</location>
        <location evidence="1">Cell wall</location>
    </subcellularLocation>
</comment>
<feature type="chain" id="PRO_0000079682" description="33 kDa cell wall protein">
    <location>
        <begin position="1"/>
        <end position="15" status="greater than"/>
    </location>
</feature>
<feature type="non-terminal residue" evidence="2">
    <location>
        <position position="15"/>
    </location>
</feature>
<dbReference type="GO" id="GO:0005576">
    <property type="term" value="C:extracellular region"/>
    <property type="evidence" value="ECO:0007669"/>
    <property type="project" value="UniProtKB-KW"/>
</dbReference>
<protein>
    <recommendedName>
        <fullName>33 kDa cell wall protein</fullName>
    </recommendedName>
</protein>
<accession>P80776</accession>